<feature type="chain" id="PRO_0000051277" description="Transducin-like enhancer protein 1">
    <location>
        <begin position="1"/>
        <end position="770"/>
    </location>
</feature>
<feature type="repeat" description="WD 1">
    <location>
        <begin position="470"/>
        <end position="501"/>
    </location>
</feature>
<feature type="repeat" description="WD 2">
    <location>
        <begin position="528"/>
        <end position="558"/>
    </location>
</feature>
<feature type="repeat" description="WD 3">
    <location>
        <begin position="572"/>
        <end position="602"/>
    </location>
</feature>
<feature type="repeat" description="WD 4">
    <location>
        <begin position="614"/>
        <end position="644"/>
    </location>
</feature>
<feature type="repeat" description="WD 5">
    <location>
        <begin position="696"/>
        <end position="726"/>
    </location>
</feature>
<feature type="repeat" description="WD 6">
    <location>
        <begin position="737"/>
        <end position="767"/>
    </location>
</feature>
<feature type="region of interest" description="Q domain" evidence="2">
    <location>
        <begin position="1"/>
        <end position="131"/>
    </location>
</feature>
<feature type="region of interest" description="Disordered" evidence="4">
    <location>
        <begin position="128"/>
        <end position="157"/>
    </location>
</feature>
<feature type="region of interest" description="GP domain" evidence="2">
    <location>
        <begin position="132"/>
        <end position="199"/>
    </location>
</feature>
<feature type="region of interest" description="Disordered" evidence="4">
    <location>
        <begin position="176"/>
        <end position="346"/>
    </location>
</feature>
<feature type="region of interest" description="CcN domain" evidence="2">
    <location>
        <begin position="200"/>
        <end position="266"/>
    </location>
</feature>
<feature type="region of interest" description="SP domain" evidence="2">
    <location>
        <begin position="267"/>
        <end position="450"/>
    </location>
</feature>
<feature type="short sequence motif" description="Nuclear localization signal" evidence="3">
    <location>
        <begin position="225"/>
        <end position="228"/>
    </location>
</feature>
<feature type="compositionally biased region" description="Low complexity" evidence="4">
    <location>
        <begin position="146"/>
        <end position="157"/>
    </location>
</feature>
<feature type="compositionally biased region" description="Basic and acidic residues" evidence="4">
    <location>
        <begin position="178"/>
        <end position="196"/>
    </location>
</feature>
<feature type="compositionally biased region" description="Basic and acidic residues" evidence="4">
    <location>
        <begin position="209"/>
        <end position="244"/>
    </location>
</feature>
<feature type="compositionally biased region" description="Low complexity" evidence="4">
    <location>
        <begin position="255"/>
        <end position="264"/>
    </location>
</feature>
<feature type="compositionally biased region" description="Basic and acidic residues" evidence="4">
    <location>
        <begin position="265"/>
        <end position="281"/>
    </location>
</feature>
<feature type="compositionally biased region" description="Low complexity" evidence="4">
    <location>
        <begin position="282"/>
        <end position="297"/>
    </location>
</feature>
<feature type="compositionally biased region" description="Basic and acidic residues" evidence="4">
    <location>
        <begin position="298"/>
        <end position="308"/>
    </location>
</feature>
<feature type="modified residue" description="Phosphoserine; by CK2" evidence="2 3">
    <location>
        <position position="237"/>
    </location>
</feature>
<feature type="modified residue" description="Phosphoserine; by CDK1" evidence="3">
    <location>
        <position position="257"/>
    </location>
</feature>
<feature type="modified residue" description="Phosphoserine; by CDK1" evidence="3">
    <location>
        <position position="261"/>
    </location>
</feature>
<feature type="modified residue" description="Phosphoserine; by CDK1" evidence="3">
    <location>
        <position position="265"/>
    </location>
</feature>
<feature type="modified residue" description="Phosphoserine" evidence="16">
    <location>
        <position position="284"/>
    </location>
</feature>
<feature type="splice variant" id="VSP_006987" description="In isoform 5." evidence="13">
    <original>MFPQSRHPTPHQAAGQPFKFTIPESLDRIKEEFQFLQAQYH</original>
    <variation>MFTLSCLFCFP</variation>
    <location>
        <begin position="1"/>
        <end position="41"/>
    </location>
</feature>
<feature type="splice variant" id="VSP_006988" description="In isoform 3." evidence="12">
    <location>
        <begin position="79"/>
        <end position="198"/>
    </location>
</feature>
<feature type="splice variant" id="VSP_006989" description="In isoform 2 and isoform 4." evidence="12">
    <location>
        <begin position="125"/>
        <end position="198"/>
    </location>
</feature>
<feature type="splice variant" id="VSP_006990" description="In isoform 8." evidence="12">
    <location>
        <position position="127"/>
    </location>
</feature>
<feature type="splice variant" id="VSP_006992" description="In isoform 7 and isoform 8." evidence="12 13">
    <original>DRESGTSN</original>
    <variation>GERPGKPD</variation>
    <location>
        <begin position="193"/>
        <end position="200"/>
    </location>
</feature>
<feature type="splice variant" id="VSP_006993" description="In isoform 7 and isoform 8." evidence="12 13">
    <location>
        <begin position="201"/>
        <end position="770"/>
    </location>
</feature>
<feature type="splice variant" id="VSP_006991" description="In isoform 4." evidence="14">
    <location>
        <begin position="477"/>
        <end position="658"/>
    </location>
</feature>
<feature type="splice variant" id="VSP_006994" description="In isoform 6." evidence="12">
    <original>RQLQQ</original>
    <variation>NKSYQ</variation>
    <location>
        <begin position="649"/>
        <end position="653"/>
    </location>
</feature>
<feature type="splice variant" id="VSP_006995" description="In isoform 6." evidence="12">
    <location>
        <begin position="654"/>
        <end position="770"/>
    </location>
</feature>
<feature type="sequence conflict" description="In Ref. 2; AAN77514." evidence="14" ref="2">
    <original>E</original>
    <variation>G</variation>
    <location>
        <position position="48"/>
    </location>
</feature>
<feature type="sequence conflict" description="In Ref. 1; AAB49934." evidence="14" ref="1">
    <original>V</original>
    <variation>D</variation>
    <location>
        <position position="92"/>
    </location>
</feature>
<feature type="sequence conflict" description="In Ref. 2; AAN77518." evidence="14" ref="2">
    <original>I</original>
    <variation>T</variation>
    <location>
        <position position="122"/>
    </location>
</feature>
<feature type="sequence conflict" description="In Ref. 1; AAB49934." evidence="14" ref="1">
    <original>S</original>
    <variation>G</variation>
    <location>
        <position position="163"/>
    </location>
</feature>
<feature type="sequence conflict" description="In Ref. 1, 2; AAN77514/AAN77518 and 3; BAC35221." evidence="14" ref="1 2 3">
    <original>S</original>
    <variation>P</variation>
    <location>
        <position position="196"/>
    </location>
</feature>
<feature type="sequence conflict" description="In Ref. 1, 2; AAN77519 and 3; BAC35221/BAC38509." evidence="14" ref="1 2 3">
    <original>S</original>
    <variation>G</variation>
    <location>
        <position position="210"/>
    </location>
</feature>
<feature type="sequence conflict" description="In Ref. 2; AAN77514." evidence="14" ref="2">
    <original>V</original>
    <variation>I</variation>
    <location>
        <position position="247"/>
    </location>
</feature>
<feature type="sequence conflict" description="In Ref. 2; AAN77514/AAN77518." evidence="14" ref="2">
    <original>P</original>
    <variation>S</variation>
    <location>
        <position position="258"/>
    </location>
</feature>
<feature type="sequence conflict" description="In Ref. 2; AAN77518." evidence="14" ref="2">
    <original>R</original>
    <variation>S</variation>
    <location>
        <position position="428"/>
    </location>
</feature>
<feature type="sequence conflict" description="In Ref. 1; AAB49934." evidence="14" ref="1">
    <original>DA</original>
    <variation>MP</variation>
    <location>
        <begin position="464"/>
        <end position="465"/>
    </location>
</feature>
<feature type="sequence conflict" description="In Ref. 1; AAB49934." evidence="14" ref="1">
    <original>I</original>
    <variation>F</variation>
    <location>
        <position position="471"/>
    </location>
</feature>
<feature type="sequence conflict" description="In Ref. 1; AAB49934." evidence="14" ref="1">
    <original>S</original>
    <variation>T</variation>
    <location>
        <position position="535"/>
    </location>
</feature>
<feature type="sequence conflict" description="In Ref. 1; AAB49934." evidence="14" ref="1">
    <original>G</original>
    <variation>D</variation>
    <location>
        <position position="542"/>
    </location>
</feature>
<feature type="sequence conflict" description="In Ref. 2; AAN77517." evidence="14" ref="2">
    <original>A</original>
    <variation>T</variation>
    <location>
        <position position="551"/>
    </location>
</feature>
<feature type="sequence conflict" description="In Ref. 3; BAC35221." evidence="14" ref="3">
    <original>F</original>
    <variation>Y</variation>
    <location>
        <position position="612"/>
    </location>
</feature>
<organism>
    <name type="scientific">Mus musculus</name>
    <name type="common">Mouse</name>
    <dbReference type="NCBI Taxonomy" id="10090"/>
    <lineage>
        <taxon>Eukaryota</taxon>
        <taxon>Metazoa</taxon>
        <taxon>Chordata</taxon>
        <taxon>Craniata</taxon>
        <taxon>Vertebrata</taxon>
        <taxon>Euteleostomi</taxon>
        <taxon>Mammalia</taxon>
        <taxon>Eutheria</taxon>
        <taxon>Euarchontoglires</taxon>
        <taxon>Glires</taxon>
        <taxon>Rodentia</taxon>
        <taxon>Myomorpha</taxon>
        <taxon>Muroidea</taxon>
        <taxon>Muridae</taxon>
        <taxon>Murinae</taxon>
        <taxon>Mus</taxon>
        <taxon>Mus</taxon>
    </lineage>
</organism>
<comment type="function">
    <text evidence="1 8">Transcriptional corepressor that binds to a number of transcription factors. Inhibits NF-kappa-B-regulated gene expression. Inhibits the transcriptional activation mediated by FOXA2, and by CTNNB1 and TCF family members in Wnt signaling. Enhances FOXG1/BF-1- and HES1-mediated transcriptional repression (PubMed:16314515). The effects of full-length TLE family members may be modulated by association with dominant-negative AES. Unusual function as coactivator for ESRRG (By similarity).</text>
</comment>
<comment type="subunit">
    <text evidence="1 2 5 8 9">Homooligomer and heterooligomer with other family members. Binds RUNX1, RUNX3, FOXA2, KDM6A, UTY, histone H3, HESX1, ESRRG and the NF-kappa-B subunit RELA. Interacts with HES1 (via WRPW motif) (By similarity). Binds TCF7, LEF1, TCF7L1 and TCF7L2 (PubMed:11266540). Interacts with SIX3 (By similarity). Interacts with EFNB1. Interacts with TLE4 (PubMed:16314515). Interacts with FOXG1/BF-1; the interaction is inhibited by TLE6/GRG6 (PubMed:16314515).</text>
</comment>
<comment type="subcellular location">
    <subcellularLocation>
        <location evidence="11">Nucleus</location>
    </subcellularLocation>
    <text>Nuclear and chromatin-associated, depending on isoforms and phosphorylation status. Hyperphosphorylation decreases the affinity for nuclear components.</text>
</comment>
<comment type="subcellular location">
    <molecule>Isoform 7</molecule>
    <subcellularLocation>
        <location evidence="7">Nucleus</location>
    </subcellularLocation>
    <subcellularLocation>
        <location evidence="7">Cytoplasm</location>
    </subcellularLocation>
</comment>
<comment type="subcellular location">
    <molecule>Isoform 8</molecule>
    <subcellularLocation>
        <location evidence="7">Nucleus</location>
    </subcellularLocation>
    <subcellularLocation>
        <location evidence="7">Cytoplasm</location>
    </subcellularLocation>
</comment>
<comment type="alternative products">
    <event type="alternative splicing"/>
    <isoform>
        <id>Q62440-1</id>
        <name>1</name>
        <sequence type="displayed"/>
    </isoform>
    <isoform>
        <id>Q62440-2</id>
        <name>2</name>
        <sequence type="described" ref="VSP_006989"/>
    </isoform>
    <isoform>
        <id>Q62440-3</id>
        <name>3</name>
        <sequence type="described" ref="VSP_006988"/>
    </isoform>
    <isoform>
        <id>Q62440-4</id>
        <name>4</name>
        <sequence type="described" ref="VSP_006989 VSP_006991"/>
    </isoform>
    <isoform>
        <id>Q62440-5</id>
        <name>5</name>
        <sequence type="described" ref="VSP_006987"/>
    </isoform>
    <isoform>
        <id>Q62440-6</id>
        <name>6</name>
        <sequence type="described" ref="VSP_006994 VSP_006995"/>
    </isoform>
    <isoform>
        <id>Q62440-7</id>
        <name>7</name>
        <sequence type="described" ref="VSP_006992 VSP_006993"/>
    </isoform>
    <isoform>
        <id>Q62440-8</id>
        <name>8</name>
        <sequence type="described" ref="VSP_006990 VSP_006992 VSP_006993"/>
    </isoform>
</comment>
<comment type="tissue specificity">
    <text evidence="10">Highly expressed in liver and lung. Detected at slightly lower levels in heart, brain, kidney and testis. Detected in fetal and adult stomach and small intestine, in adult ileum, duodenum and colon. Expressed in bone marrow-derived macrophages (PubMed:23990468).</text>
</comment>
<comment type="tissue specificity">
    <molecule>Isoform 7</molecule>
    <text evidence="7">Most abundant at the base of the crypts of Lieberkuhn in the small intestine.</text>
</comment>
<comment type="tissue specificity">
    <molecule>Isoform 8</molecule>
    <text evidence="7">Most abundant at the base of the crypts of Lieberkuhn in the small intestine.</text>
</comment>
<comment type="domain">
    <text evidence="15">WD repeat Groucho/TLE family members are characterized by 5 regions, a glutamine-rich Q domain, a glycine/proline-rich GP domain, a central CcN domain, containing a nuclear localization signal, and a serine/proline-rich SP domain. The most highly conserved are the N-terminal Q domain and the C-terminal WD-repeat domain.</text>
</comment>
<comment type="PTM">
    <text evidence="6 11">Phosphorylated, probably by CDK1. The degree of phosphorylation varies throughout the cell cycle, and is highest at the G2/M transition. Becomes hyperphosphorylated in response to cell differentiation and interaction with HES1 or RUNX1.</text>
</comment>
<comment type="PTM">
    <text evidence="1">Ubiquitinated by XIAP/BIRC4.</text>
</comment>
<comment type="similarity">
    <text evidence="14">Belongs to the WD repeat Groucho/TLE family.</text>
</comment>
<keyword id="KW-0025">Alternative splicing</keyword>
<keyword id="KW-0963">Cytoplasm</keyword>
<keyword id="KW-0539">Nucleus</keyword>
<keyword id="KW-0597">Phosphoprotein</keyword>
<keyword id="KW-1185">Reference proteome</keyword>
<keyword id="KW-0677">Repeat</keyword>
<keyword id="KW-0678">Repressor</keyword>
<keyword id="KW-0804">Transcription</keyword>
<keyword id="KW-0805">Transcription regulation</keyword>
<keyword id="KW-0832">Ubl conjugation</keyword>
<keyword id="KW-0853">WD repeat</keyword>
<keyword id="KW-0879">Wnt signaling pathway</keyword>
<evidence type="ECO:0000250" key="1"/>
<evidence type="ECO:0000250" key="2">
    <source>
        <dbReference type="UniProtKB" id="Q04724"/>
    </source>
</evidence>
<evidence type="ECO:0000255" key="3"/>
<evidence type="ECO:0000256" key="4">
    <source>
        <dbReference type="SAM" id="MobiDB-lite"/>
    </source>
</evidence>
<evidence type="ECO:0000269" key="5">
    <source>
    </source>
</evidence>
<evidence type="ECO:0000269" key="6">
    <source>
    </source>
</evidence>
<evidence type="ECO:0000269" key="7">
    <source>
    </source>
</evidence>
<evidence type="ECO:0000269" key="8">
    <source>
    </source>
</evidence>
<evidence type="ECO:0000269" key="9">
    <source>
    </source>
</evidence>
<evidence type="ECO:0000269" key="10">
    <source>
    </source>
</evidence>
<evidence type="ECO:0000269" key="11">
    <source>
    </source>
</evidence>
<evidence type="ECO:0000303" key="12">
    <source>
    </source>
</evidence>
<evidence type="ECO:0000303" key="13">
    <source>
    </source>
</evidence>
<evidence type="ECO:0000305" key="14"/>
<evidence type="ECO:0000305" key="15">
    <source>
    </source>
</evidence>
<evidence type="ECO:0007744" key="16">
    <source>
    </source>
</evidence>
<protein>
    <recommendedName>
        <fullName>Transducin-like enhancer protein 1</fullName>
    </recommendedName>
    <alternativeName>
        <fullName>Groucho-related protein 1</fullName>
        <shortName>Grg-1</shortName>
    </alternativeName>
</protein>
<dbReference type="EMBL" id="U61362">
    <property type="protein sequence ID" value="AAB49934.1"/>
    <property type="molecule type" value="mRNA"/>
</dbReference>
<dbReference type="EMBL" id="AY155195">
    <property type="protein sequence ID" value="AAN77514.1"/>
    <property type="molecule type" value="mRNA"/>
</dbReference>
<dbReference type="EMBL" id="AY155196">
    <property type="protein sequence ID" value="AAN77515.1"/>
    <property type="molecule type" value="mRNA"/>
</dbReference>
<dbReference type="EMBL" id="AY155197">
    <property type="protein sequence ID" value="AAN77516.1"/>
    <property type="molecule type" value="mRNA"/>
</dbReference>
<dbReference type="EMBL" id="AY155198">
    <property type="protein sequence ID" value="AAN77517.1"/>
    <property type="molecule type" value="mRNA"/>
</dbReference>
<dbReference type="EMBL" id="AY155199">
    <property type="protein sequence ID" value="AAN77518.1"/>
    <property type="molecule type" value="mRNA"/>
</dbReference>
<dbReference type="EMBL" id="AY155200">
    <property type="protein sequence ID" value="AAN77519.1"/>
    <property type="molecule type" value="mRNA"/>
</dbReference>
<dbReference type="EMBL" id="AK046402">
    <property type="protein sequence ID" value="BAC32708.1"/>
    <property type="molecule type" value="mRNA"/>
</dbReference>
<dbReference type="EMBL" id="AK052961">
    <property type="protein sequence ID" value="BAC35221.1"/>
    <property type="molecule type" value="mRNA"/>
</dbReference>
<dbReference type="EMBL" id="AK076750">
    <property type="protein sequence ID" value="BAC36464.1"/>
    <property type="molecule type" value="mRNA"/>
</dbReference>
<dbReference type="EMBL" id="AK082499">
    <property type="protein sequence ID" value="BAC38509.1"/>
    <property type="molecule type" value="mRNA"/>
</dbReference>
<dbReference type="EMBL" id="AL773513">
    <property type="status" value="NOT_ANNOTATED_CDS"/>
    <property type="molecule type" value="Genomic_DNA"/>
</dbReference>
<dbReference type="CCDS" id="CCDS18274.1">
    <molecule id="Q62440-1"/>
</dbReference>
<dbReference type="CCDS" id="CCDS71407.1">
    <molecule id="Q62440-7"/>
</dbReference>
<dbReference type="RefSeq" id="NP_001272459.1">
    <property type="nucleotide sequence ID" value="NM_001285530.1"/>
</dbReference>
<dbReference type="RefSeq" id="NP_001272460.1">
    <molecule id="Q62440-7"/>
    <property type="nucleotide sequence ID" value="NM_001285531.1"/>
</dbReference>
<dbReference type="RefSeq" id="NP_001272461.1">
    <molecule id="Q62440-8"/>
    <property type="nucleotide sequence ID" value="NM_001285532.1"/>
</dbReference>
<dbReference type="RefSeq" id="NP_035729.3">
    <property type="nucleotide sequence ID" value="NM_011599.5"/>
</dbReference>
<dbReference type="SMR" id="Q62440"/>
<dbReference type="BioGRID" id="204216">
    <property type="interactions" value="17"/>
</dbReference>
<dbReference type="CORUM" id="Q62440"/>
<dbReference type="FunCoup" id="Q62440">
    <property type="interactions" value="3527"/>
</dbReference>
<dbReference type="IntAct" id="Q62440">
    <property type="interactions" value="7"/>
</dbReference>
<dbReference type="MINT" id="Q62440"/>
<dbReference type="STRING" id="10090.ENSMUSP00000072481"/>
<dbReference type="GlyGen" id="Q62440">
    <property type="glycosylation" value="4 sites, 1 O-linked glycan (2 sites)"/>
</dbReference>
<dbReference type="iPTMnet" id="Q62440"/>
<dbReference type="PhosphoSitePlus" id="Q62440"/>
<dbReference type="PaxDb" id="10090-ENSMUSP00000072481"/>
<dbReference type="PeptideAtlas" id="Q62440"/>
<dbReference type="ProteomicsDB" id="259192">
    <molecule id="Q62440-1"/>
</dbReference>
<dbReference type="ProteomicsDB" id="259193">
    <molecule id="Q62440-2"/>
</dbReference>
<dbReference type="ProteomicsDB" id="259194">
    <molecule id="Q62440-3"/>
</dbReference>
<dbReference type="ProteomicsDB" id="259195">
    <molecule id="Q62440-4"/>
</dbReference>
<dbReference type="ProteomicsDB" id="259196">
    <molecule id="Q62440-5"/>
</dbReference>
<dbReference type="ProteomicsDB" id="259197">
    <molecule id="Q62440-6"/>
</dbReference>
<dbReference type="ProteomicsDB" id="259198">
    <molecule id="Q62440-7"/>
</dbReference>
<dbReference type="ProteomicsDB" id="259199">
    <molecule id="Q62440-8"/>
</dbReference>
<dbReference type="Pumba" id="Q62440"/>
<dbReference type="Antibodypedia" id="3147">
    <property type="antibodies" value="621 antibodies from 36 providers"/>
</dbReference>
<dbReference type="DNASU" id="21885"/>
<dbReference type="Ensembl" id="ENSMUST00000107337.8">
    <molecule id="Q62440-7"/>
    <property type="protein sequence ID" value="ENSMUSP00000102960.2"/>
    <property type="gene ID" value="ENSMUSG00000008305.20"/>
</dbReference>
<dbReference type="GeneID" id="21885"/>
<dbReference type="KEGG" id="mmu:21885"/>
<dbReference type="UCSC" id="uc008tic.2">
    <molecule id="Q62440-1"/>
    <property type="organism name" value="mouse"/>
</dbReference>
<dbReference type="UCSC" id="uc008tii.3">
    <molecule id="Q62440-2"/>
    <property type="organism name" value="mouse"/>
</dbReference>
<dbReference type="UCSC" id="uc008tij.3">
    <molecule id="Q62440-7"/>
    <property type="organism name" value="mouse"/>
</dbReference>
<dbReference type="UCSC" id="uc008tik.3">
    <molecule id="Q62440-8"/>
    <property type="organism name" value="mouse"/>
</dbReference>
<dbReference type="UCSC" id="uc012dgd.2">
    <molecule id="Q62440-3"/>
    <property type="organism name" value="mouse"/>
</dbReference>
<dbReference type="AGR" id="MGI:104636"/>
<dbReference type="CTD" id="7088"/>
<dbReference type="MGI" id="MGI:104636">
    <property type="gene designation" value="Tle1"/>
</dbReference>
<dbReference type="VEuPathDB" id="HostDB:ENSMUSG00000008305"/>
<dbReference type="eggNOG" id="KOG0639">
    <property type="taxonomic scope" value="Eukaryota"/>
</dbReference>
<dbReference type="GeneTree" id="ENSGT01030000234519"/>
<dbReference type="InParanoid" id="Q62440"/>
<dbReference type="OrthoDB" id="2624652at2759"/>
<dbReference type="Reactome" id="R-MMU-201722">
    <property type="pathway name" value="Formation of the beta-catenin:TCF transactivating complex"/>
</dbReference>
<dbReference type="Reactome" id="R-MMU-3769402">
    <property type="pathway name" value="Deactivation of the beta-catenin transactivating complex"/>
</dbReference>
<dbReference type="Reactome" id="R-MMU-4641265">
    <property type="pathway name" value="Repression of WNT target genes"/>
</dbReference>
<dbReference type="BioGRID-ORCS" id="21885">
    <property type="hits" value="3 hits in 80 CRISPR screens"/>
</dbReference>
<dbReference type="ChiTaRS" id="Tle1">
    <property type="organism name" value="mouse"/>
</dbReference>
<dbReference type="PRO" id="PR:Q62440"/>
<dbReference type="Proteomes" id="UP000000589">
    <property type="component" value="Chromosome 4"/>
</dbReference>
<dbReference type="RNAct" id="Q62440">
    <property type="molecule type" value="protein"/>
</dbReference>
<dbReference type="Bgee" id="ENSMUSG00000008305">
    <property type="expression patterns" value="Expressed in rostral migratory stream and 296 other cell types or tissues"/>
</dbReference>
<dbReference type="ExpressionAtlas" id="Q62440">
    <property type="expression patterns" value="baseline and differential"/>
</dbReference>
<dbReference type="GO" id="GO:0005737">
    <property type="term" value="C:cytoplasm"/>
    <property type="evidence" value="ECO:0007669"/>
    <property type="project" value="UniProtKB-SubCell"/>
</dbReference>
<dbReference type="GO" id="GO:0005634">
    <property type="term" value="C:nucleus"/>
    <property type="evidence" value="ECO:0000314"/>
    <property type="project" value="MGI"/>
</dbReference>
<dbReference type="GO" id="GO:0005667">
    <property type="term" value="C:transcription regulator complex"/>
    <property type="evidence" value="ECO:0000314"/>
    <property type="project" value="MGI"/>
</dbReference>
<dbReference type="GO" id="GO:0003682">
    <property type="term" value="F:chromatin binding"/>
    <property type="evidence" value="ECO:0000314"/>
    <property type="project" value="MGI"/>
</dbReference>
<dbReference type="GO" id="GO:0003714">
    <property type="term" value="F:transcription corepressor activity"/>
    <property type="evidence" value="ECO:0000314"/>
    <property type="project" value="MGI"/>
</dbReference>
<dbReference type="GO" id="GO:0043124">
    <property type="term" value="P:negative regulation of canonical NF-kappaB signal transduction"/>
    <property type="evidence" value="ECO:0000250"/>
    <property type="project" value="UniProtKB"/>
</dbReference>
<dbReference type="GO" id="GO:0000122">
    <property type="term" value="P:negative regulation of transcription by RNA polymerase II"/>
    <property type="evidence" value="ECO:0000314"/>
    <property type="project" value="MGI"/>
</dbReference>
<dbReference type="GO" id="GO:0006355">
    <property type="term" value="P:regulation of DNA-templated transcription"/>
    <property type="evidence" value="ECO:0000314"/>
    <property type="project" value="MGI"/>
</dbReference>
<dbReference type="GO" id="GO:0006357">
    <property type="term" value="P:regulation of transcription by RNA polymerase II"/>
    <property type="evidence" value="ECO:0000316"/>
    <property type="project" value="MGI"/>
</dbReference>
<dbReference type="GO" id="GO:0016055">
    <property type="term" value="P:Wnt signaling pathway"/>
    <property type="evidence" value="ECO:0007669"/>
    <property type="project" value="UniProtKB-KW"/>
</dbReference>
<dbReference type="CDD" id="cd00200">
    <property type="entry name" value="WD40"/>
    <property type="match status" value="1"/>
</dbReference>
<dbReference type="FunFam" id="2.130.10.10:FF:000001">
    <property type="entry name" value="transducin-like enhancer protein 3 isoform X1"/>
    <property type="match status" value="1"/>
</dbReference>
<dbReference type="Gene3D" id="2.130.10.10">
    <property type="entry name" value="YVTN repeat-like/Quinoprotein amine dehydrogenase"/>
    <property type="match status" value="1"/>
</dbReference>
<dbReference type="InterPro" id="IPR005617">
    <property type="entry name" value="Groucho/TLE_N"/>
</dbReference>
<dbReference type="InterPro" id="IPR009146">
    <property type="entry name" value="Groucho_enhance"/>
</dbReference>
<dbReference type="InterPro" id="IPR015943">
    <property type="entry name" value="WD40/YVTN_repeat-like_dom_sf"/>
</dbReference>
<dbReference type="InterPro" id="IPR019775">
    <property type="entry name" value="WD40_repeat_CS"/>
</dbReference>
<dbReference type="InterPro" id="IPR036322">
    <property type="entry name" value="WD40_repeat_dom_sf"/>
</dbReference>
<dbReference type="InterPro" id="IPR001680">
    <property type="entry name" value="WD40_rpt"/>
</dbReference>
<dbReference type="PANTHER" id="PTHR10814">
    <property type="entry name" value="TRANSDUCIN-LIKE ENHANCER PROTEIN"/>
    <property type="match status" value="1"/>
</dbReference>
<dbReference type="PANTHER" id="PTHR10814:SF29">
    <property type="entry name" value="TRANSDUCIN-LIKE ENHANCER PROTEIN 1"/>
    <property type="match status" value="1"/>
</dbReference>
<dbReference type="Pfam" id="PF03920">
    <property type="entry name" value="TLE_N"/>
    <property type="match status" value="1"/>
</dbReference>
<dbReference type="Pfam" id="PF00400">
    <property type="entry name" value="WD40"/>
    <property type="match status" value="6"/>
</dbReference>
<dbReference type="PRINTS" id="PR01850">
    <property type="entry name" value="GROUCHOFAMLY"/>
</dbReference>
<dbReference type="SMART" id="SM00320">
    <property type="entry name" value="WD40"/>
    <property type="match status" value="7"/>
</dbReference>
<dbReference type="SUPFAM" id="SSF50978">
    <property type="entry name" value="WD40 repeat-like"/>
    <property type="match status" value="1"/>
</dbReference>
<dbReference type="PROSITE" id="PS00678">
    <property type="entry name" value="WD_REPEATS_1"/>
    <property type="match status" value="2"/>
</dbReference>
<dbReference type="PROSITE" id="PS50082">
    <property type="entry name" value="WD_REPEATS_2"/>
    <property type="match status" value="2"/>
</dbReference>
<dbReference type="PROSITE" id="PS50294">
    <property type="entry name" value="WD_REPEATS_REGION"/>
    <property type="match status" value="2"/>
</dbReference>
<sequence>MFPQSRHPTPHQAAGQPFKFTIPESLDRIKEEFQFLQAQYHSLKLECEKLASEKTEMQRHYVMYYEMSYGLNIEMHKQTEIAKRLNTICAQVIPFLSQEHQQQVAQAVERAKQVTMAELNAIIGQQQLQAQHLSHGHGPPVPLTPHPSGLQPPGIPPLGGSASLLALSSALSGQSHLAIKDDKKHHDAERHRDRESGTSNSLLVPDSLRSTDKRRNGPEFSSDIKKRKVDDKDNYDSDGDKSDDNLVVDVSNEDPSSPHASPTHSPRENGIDKNRLLKKDASGSPASTASSGSSSSLKSKEVSLHEKANTPVLKSSTPTPRSDMPTPGTSATPGLRPGLGKPPAMEPLVNQAAAGLRTPLAVPGPYPAPFGMVPHAGMNGELTSPGAAYAGLHSMSPQMSAAAAAAAAAVVAYGRSPMVGFDPPPHMRVPSIPPNLAGIPGGKPAYSFHVTADGQMQPVPFPPDALIGPGIPRHARQINTLNHGEVVCAVTISNPTRHVYTGGKGCVKVWDISHPGNKSPVSQLDCLNRDNYIRSCKLLPDGCTLIVGGEASTLSIWDLAAPTPRIKAELTSSAPACYALAISPDSKVCFSCCSDGNIAVWDLHNQTLVRQFQGHTDGASCIDISNDGTKLWTGGLDNTVRSWDLREGRQLQQHDFTSQIFSLGYCPTGEWLAVGMESSNVEVLHVNKPDKYQLHLHESCVLSLKFAYCGKWFVSTGKDNLLNAWRTPYGASIFQSKESSSVLSCDISVDDKYIVTGSGDKKATVYEVIY</sequence>
<name>TLE1_MOUSE</name>
<reference key="1">
    <citation type="journal article" date="1996" name="Mech. Dev.">
        <title>Transcripts of Grg4, a murine groucho-related gene, are detected in adjacent tissues to other murine neurogenic gene homologues during embryonic development.</title>
        <authorList>
            <person name="Koop K.E."/>
            <person name="Macdonald L.M."/>
            <person name="Lobe C.G."/>
        </authorList>
    </citation>
    <scope>NUCLEOTIDE SEQUENCE [MRNA] (ISOFORM 1)</scope>
</reference>
<reference key="2">
    <citation type="journal article" date="2002" name="J. Biol. Chem.">
        <title>Characterization of a novel mammalian groucho isoform and its role in transcriptional regulation.</title>
        <authorList>
            <person name="Lepourcelet M."/>
            <person name="Shivdasani R.A."/>
        </authorList>
    </citation>
    <scope>NUCLEOTIDE SEQUENCE [MRNA] (ISOFORMS 1; 2; 3; 6 AND 8)</scope>
    <scope>PARTIAL NUCLEOTIDE SEQUENCE [MRNA] (ISOFORM 4)</scope>
    <scope>SUBCELLULAR LOCATION</scope>
    <scope>TISSUE SPECIFICITY</scope>
    <source>
        <strain>C57BL/6J</strain>
        <strain>ICR</strain>
        <tissue>Fetal intestine</tissue>
    </source>
</reference>
<reference key="3">
    <citation type="journal article" date="2005" name="Science">
        <title>The transcriptional landscape of the mammalian genome.</title>
        <authorList>
            <person name="Carninci P."/>
            <person name="Kasukawa T."/>
            <person name="Katayama S."/>
            <person name="Gough J."/>
            <person name="Frith M.C."/>
            <person name="Maeda N."/>
            <person name="Oyama R."/>
            <person name="Ravasi T."/>
            <person name="Lenhard B."/>
            <person name="Wells C."/>
            <person name="Kodzius R."/>
            <person name="Shimokawa K."/>
            <person name="Bajic V.B."/>
            <person name="Brenner S.E."/>
            <person name="Batalov S."/>
            <person name="Forrest A.R."/>
            <person name="Zavolan M."/>
            <person name="Davis M.J."/>
            <person name="Wilming L.G."/>
            <person name="Aidinis V."/>
            <person name="Allen J.E."/>
            <person name="Ambesi-Impiombato A."/>
            <person name="Apweiler R."/>
            <person name="Aturaliya R.N."/>
            <person name="Bailey T.L."/>
            <person name="Bansal M."/>
            <person name="Baxter L."/>
            <person name="Beisel K.W."/>
            <person name="Bersano T."/>
            <person name="Bono H."/>
            <person name="Chalk A.M."/>
            <person name="Chiu K.P."/>
            <person name="Choudhary V."/>
            <person name="Christoffels A."/>
            <person name="Clutterbuck D.R."/>
            <person name="Crowe M.L."/>
            <person name="Dalla E."/>
            <person name="Dalrymple B.P."/>
            <person name="de Bono B."/>
            <person name="Della Gatta G."/>
            <person name="di Bernardo D."/>
            <person name="Down T."/>
            <person name="Engstrom P."/>
            <person name="Fagiolini M."/>
            <person name="Faulkner G."/>
            <person name="Fletcher C.F."/>
            <person name="Fukushima T."/>
            <person name="Furuno M."/>
            <person name="Futaki S."/>
            <person name="Gariboldi M."/>
            <person name="Georgii-Hemming P."/>
            <person name="Gingeras T.R."/>
            <person name="Gojobori T."/>
            <person name="Green R.E."/>
            <person name="Gustincich S."/>
            <person name="Harbers M."/>
            <person name="Hayashi Y."/>
            <person name="Hensch T.K."/>
            <person name="Hirokawa N."/>
            <person name="Hill D."/>
            <person name="Huminiecki L."/>
            <person name="Iacono M."/>
            <person name="Ikeo K."/>
            <person name="Iwama A."/>
            <person name="Ishikawa T."/>
            <person name="Jakt M."/>
            <person name="Kanapin A."/>
            <person name="Katoh M."/>
            <person name="Kawasawa Y."/>
            <person name="Kelso J."/>
            <person name="Kitamura H."/>
            <person name="Kitano H."/>
            <person name="Kollias G."/>
            <person name="Krishnan S.P."/>
            <person name="Kruger A."/>
            <person name="Kummerfeld S.K."/>
            <person name="Kurochkin I.V."/>
            <person name="Lareau L.F."/>
            <person name="Lazarevic D."/>
            <person name="Lipovich L."/>
            <person name="Liu J."/>
            <person name="Liuni S."/>
            <person name="McWilliam S."/>
            <person name="Madan Babu M."/>
            <person name="Madera M."/>
            <person name="Marchionni L."/>
            <person name="Matsuda H."/>
            <person name="Matsuzawa S."/>
            <person name="Miki H."/>
            <person name="Mignone F."/>
            <person name="Miyake S."/>
            <person name="Morris K."/>
            <person name="Mottagui-Tabar S."/>
            <person name="Mulder N."/>
            <person name="Nakano N."/>
            <person name="Nakauchi H."/>
            <person name="Ng P."/>
            <person name="Nilsson R."/>
            <person name="Nishiguchi S."/>
            <person name="Nishikawa S."/>
            <person name="Nori F."/>
            <person name="Ohara O."/>
            <person name="Okazaki Y."/>
            <person name="Orlando V."/>
            <person name="Pang K.C."/>
            <person name="Pavan W.J."/>
            <person name="Pavesi G."/>
            <person name="Pesole G."/>
            <person name="Petrovsky N."/>
            <person name="Piazza S."/>
            <person name="Reed J."/>
            <person name="Reid J.F."/>
            <person name="Ring B.Z."/>
            <person name="Ringwald M."/>
            <person name="Rost B."/>
            <person name="Ruan Y."/>
            <person name="Salzberg S.L."/>
            <person name="Sandelin A."/>
            <person name="Schneider C."/>
            <person name="Schoenbach C."/>
            <person name="Sekiguchi K."/>
            <person name="Semple C.A."/>
            <person name="Seno S."/>
            <person name="Sessa L."/>
            <person name="Sheng Y."/>
            <person name="Shibata Y."/>
            <person name="Shimada H."/>
            <person name="Shimada K."/>
            <person name="Silva D."/>
            <person name="Sinclair B."/>
            <person name="Sperling S."/>
            <person name="Stupka E."/>
            <person name="Sugiura K."/>
            <person name="Sultana R."/>
            <person name="Takenaka Y."/>
            <person name="Taki K."/>
            <person name="Tammoja K."/>
            <person name="Tan S.L."/>
            <person name="Tang S."/>
            <person name="Taylor M.S."/>
            <person name="Tegner J."/>
            <person name="Teichmann S.A."/>
            <person name="Ueda H.R."/>
            <person name="van Nimwegen E."/>
            <person name="Verardo R."/>
            <person name="Wei C.L."/>
            <person name="Yagi K."/>
            <person name="Yamanishi H."/>
            <person name="Zabarovsky E."/>
            <person name="Zhu S."/>
            <person name="Zimmer A."/>
            <person name="Hide W."/>
            <person name="Bult C."/>
            <person name="Grimmond S.M."/>
            <person name="Teasdale R.D."/>
            <person name="Liu E.T."/>
            <person name="Brusic V."/>
            <person name="Quackenbush J."/>
            <person name="Wahlestedt C."/>
            <person name="Mattick J.S."/>
            <person name="Hume D.A."/>
            <person name="Kai C."/>
            <person name="Sasaki D."/>
            <person name="Tomaru Y."/>
            <person name="Fukuda S."/>
            <person name="Kanamori-Katayama M."/>
            <person name="Suzuki M."/>
            <person name="Aoki J."/>
            <person name="Arakawa T."/>
            <person name="Iida J."/>
            <person name="Imamura K."/>
            <person name="Itoh M."/>
            <person name="Kato T."/>
            <person name="Kawaji H."/>
            <person name="Kawagashira N."/>
            <person name="Kawashima T."/>
            <person name="Kojima M."/>
            <person name="Kondo S."/>
            <person name="Konno H."/>
            <person name="Nakano K."/>
            <person name="Ninomiya N."/>
            <person name="Nishio T."/>
            <person name="Okada M."/>
            <person name="Plessy C."/>
            <person name="Shibata K."/>
            <person name="Shiraki T."/>
            <person name="Suzuki S."/>
            <person name="Tagami M."/>
            <person name="Waki K."/>
            <person name="Watahiki A."/>
            <person name="Okamura-Oho Y."/>
            <person name="Suzuki H."/>
            <person name="Kawai J."/>
            <person name="Hayashizaki Y."/>
        </authorList>
    </citation>
    <scope>NUCLEOTIDE SEQUENCE [LARGE SCALE MRNA] (ISOFORMS 1; 5 AND 7)</scope>
    <source>
        <strain>C57BL/6J</strain>
        <tissue>Cerebellum</tissue>
    </source>
</reference>
<reference key="4">
    <citation type="journal article" date="2009" name="PLoS Biol.">
        <title>Lineage-specific biology revealed by a finished genome assembly of the mouse.</title>
        <authorList>
            <person name="Church D.M."/>
            <person name="Goodstadt L."/>
            <person name="Hillier L.W."/>
            <person name="Zody M.C."/>
            <person name="Goldstein S."/>
            <person name="She X."/>
            <person name="Bult C.J."/>
            <person name="Agarwala R."/>
            <person name="Cherry J.L."/>
            <person name="DiCuccio M."/>
            <person name="Hlavina W."/>
            <person name="Kapustin Y."/>
            <person name="Meric P."/>
            <person name="Maglott D."/>
            <person name="Birtle Z."/>
            <person name="Marques A.C."/>
            <person name="Graves T."/>
            <person name="Zhou S."/>
            <person name="Teague B."/>
            <person name="Potamousis K."/>
            <person name="Churas C."/>
            <person name="Place M."/>
            <person name="Herschleb J."/>
            <person name="Runnheim R."/>
            <person name="Forrest D."/>
            <person name="Amos-Landgraf J."/>
            <person name="Schwartz D.C."/>
            <person name="Cheng Z."/>
            <person name="Lindblad-Toh K."/>
            <person name="Eichler E.E."/>
            <person name="Ponting C.P."/>
        </authorList>
    </citation>
    <scope>NUCLEOTIDE SEQUENCE [LARGE SCALE GENOMIC DNA]</scope>
    <source>
        <strain>C57BL/6J</strain>
    </source>
</reference>
<reference key="5">
    <citation type="journal article" date="1996" name="Biochem. J.">
        <title>Affinity for the nuclear compartment and expression during cell differentiation implicate phosphorylated Groucho/TLE1 forms of higher molecular mass in nuclear functions.</title>
        <authorList>
            <person name="Husain J."/>
            <person name="Lo R."/>
            <person name="Grbavec D."/>
            <person name="Stifani S."/>
        </authorList>
    </citation>
    <scope>SUBCELLULAR LOCATION</scope>
    <scope>PHOSPHORYLATION</scope>
</reference>
<reference key="6">
    <citation type="journal article" date="2001" name="Nucleic Acids Res.">
        <title>All Tcf HMG box transcription factors interact with Groucho-related co-repressors.</title>
        <authorList>
            <person name="Brantjes H."/>
            <person name="Roose J."/>
            <person name="van De Wetering M."/>
            <person name="Clevers H."/>
        </authorList>
    </citation>
    <scope>INTERACTION WITH TCF7; LEF1; TCF7L1 AND TCF7L2</scope>
</reference>
<reference key="7">
    <citation type="journal article" date="2002" name="Mol. Cell. Biol.">
        <title>Role for Hes1-induced phosphorylation in Groucho-mediated transcriptional repression.</title>
        <authorList>
            <person name="Nuthall H.N."/>
            <person name="Husain J."/>
            <person name="McLarren K.W."/>
            <person name="Stifani S."/>
        </authorList>
    </citation>
    <scope>PHOSPHORYLATION DURING NEURAL CELL DIFFERENTIATION</scope>
</reference>
<reference key="8">
    <citation type="journal article" date="2005" name="Mol. Cell. Biol.">
        <title>Antagonistic effects of Grg6 and Groucho/TLE on the transcription repression activity of brain factor 1/FoxG1 and cortical neuron differentiation.</title>
        <authorList>
            <person name="Marcal N."/>
            <person name="Patel H."/>
            <person name="Dong Z."/>
            <person name="Belanger-Jasmin S."/>
            <person name="Hoffman B."/>
            <person name="Helgason C.D."/>
            <person name="Dang J."/>
            <person name="Stifani S."/>
        </authorList>
    </citation>
    <scope>FUNCTION</scope>
    <scope>INTERACTION WITH TLE4 AND FOXG1</scope>
</reference>
<reference key="9">
    <citation type="journal article" date="2008" name="Genome Biol.">
        <title>The Groucho/TLE/Grg family of transcriptional co-repressors.</title>
        <authorList>
            <person name="Jennings B.H."/>
            <person name="Ish-Horowicz D."/>
        </authorList>
    </citation>
    <scope>REVIEW</scope>
</reference>
<reference key="10">
    <citation type="journal article" date="2010" name="Cell">
        <title>A tissue-specific atlas of mouse protein phosphorylation and expression.</title>
        <authorList>
            <person name="Huttlin E.L."/>
            <person name="Jedrychowski M.P."/>
            <person name="Elias J.E."/>
            <person name="Goswami T."/>
            <person name="Rad R."/>
            <person name="Beausoleil S.A."/>
            <person name="Villen J."/>
            <person name="Haas W."/>
            <person name="Sowa M.E."/>
            <person name="Gygi S.P."/>
        </authorList>
    </citation>
    <scope>PHOSPHORYLATION [LARGE SCALE ANALYSIS] AT SER-284</scope>
    <scope>IDENTIFICATION BY MASS SPECTROMETRY [LARGE SCALE ANALYSIS]</scope>
    <source>
        <tissue>Testis</tissue>
    </source>
</reference>
<reference key="11">
    <citation type="journal article" date="2011" name="BMB Rep.">
        <title>EphrinB1 interacts with the transcriptional co-repressor Groucho/xTLE4.</title>
        <authorList>
            <person name="Kamata T."/>
            <person name="Bong Y.S."/>
            <person name="Mood K."/>
            <person name="Park M.J."/>
            <person name="Nishanian T.G."/>
            <person name="Lee H.S."/>
        </authorList>
    </citation>
    <scope>INTERACTION WITH EFNB1</scope>
</reference>
<reference key="12">
    <citation type="journal article" date="2013" name="J. Biol. Chem.">
        <title>The paired-box homeodomain transcription factor Pax6 binds to the upstream region of the TRAP gene promoter and suppresses receptor activator of NF-kappaB ligand (RANKL)-induced osteoclast differentiation.</title>
        <authorList>
            <person name="Kogawa M."/>
            <person name="Hisatake K."/>
            <person name="Atkins G.J."/>
            <person name="Findlay D.M."/>
            <person name="Enoki Y."/>
            <person name="Sato T."/>
            <person name="Gray P.C."/>
            <person name="Kanesaki-Yatsuka Y."/>
            <person name="Anderson P.H."/>
            <person name="Wada S."/>
            <person name="Kato N."/>
            <person name="Fukuda A."/>
            <person name="Katayama S."/>
            <person name="Tsujimoto M."/>
            <person name="Yoda T."/>
            <person name="Suda T."/>
            <person name="Okazaki Y."/>
            <person name="Matsumoto M."/>
        </authorList>
    </citation>
    <scope>TISSUE SPECIFICITY</scope>
</reference>
<proteinExistence type="evidence at protein level"/>
<accession>Q62440</accession>
<accession>Q5SQA8</accession>
<gene>
    <name type="primary">Tle1</name>
    <name type="synonym">Grg1</name>
</gene>